<sequence>MKWIKSTGSIGLSLLLFLSSFSHSLYAAPLRVISLSPSTTELAYAAGLGDNLIAASAYSDYPPQARKLEQVANWQGINLERIITLKPELILAWRGGNPQRPLEQLAAFGIKIFYSDPTTTEQIAQDLERLAEYSPHPEQAKKSATELRQRFANLQQQYATTTPKPAFLQFGTYPLFTTSGQTLQSEVLSICGGRNIFANSPVPWPQVSREQVLIRKPEIIVISGGQEQVKLIENFWHPQLRAKVITLHEDWFHRAGPRIILAAEQLCQQLNDNGS</sequence>
<dbReference type="EMBL" id="BX571861">
    <property type="protein sequence ID" value="CAE13200.1"/>
    <property type="molecule type" value="Genomic_DNA"/>
</dbReference>
<dbReference type="RefSeq" id="WP_011145270.1">
    <property type="nucleotide sequence ID" value="NC_005126.1"/>
</dbReference>
<dbReference type="SMR" id="Q7N842"/>
<dbReference type="STRING" id="243265.plu0905"/>
<dbReference type="GeneID" id="48847195"/>
<dbReference type="KEGG" id="plu:plu0905"/>
<dbReference type="eggNOG" id="COG0614">
    <property type="taxonomic scope" value="Bacteria"/>
</dbReference>
<dbReference type="HOGENOM" id="CLU_038034_2_5_6"/>
<dbReference type="OrthoDB" id="6495095at2"/>
<dbReference type="Proteomes" id="UP000002514">
    <property type="component" value="Chromosome"/>
</dbReference>
<dbReference type="GO" id="GO:0042597">
    <property type="term" value="C:periplasmic space"/>
    <property type="evidence" value="ECO:0007669"/>
    <property type="project" value="UniProtKB-SubCell"/>
</dbReference>
<dbReference type="GO" id="GO:0031419">
    <property type="term" value="F:cobalamin binding"/>
    <property type="evidence" value="ECO:0007669"/>
    <property type="project" value="InterPro"/>
</dbReference>
<dbReference type="GO" id="GO:0015889">
    <property type="term" value="P:cobalamin transport"/>
    <property type="evidence" value="ECO:0007669"/>
    <property type="project" value="UniProtKB-UniRule"/>
</dbReference>
<dbReference type="CDD" id="cd01144">
    <property type="entry name" value="BtuF"/>
    <property type="match status" value="1"/>
</dbReference>
<dbReference type="Gene3D" id="3.40.50.1980">
    <property type="entry name" value="Nitrogenase molybdenum iron protein domain"/>
    <property type="match status" value="2"/>
</dbReference>
<dbReference type="HAMAP" id="MF_01000">
    <property type="entry name" value="BtuF"/>
    <property type="match status" value="1"/>
</dbReference>
<dbReference type="InterPro" id="IPR002491">
    <property type="entry name" value="ABC_transptr_periplasmic_BD"/>
</dbReference>
<dbReference type="InterPro" id="IPR023544">
    <property type="entry name" value="ABC_transptr_vit_B12-bd"/>
</dbReference>
<dbReference type="InterPro" id="IPR054828">
    <property type="entry name" value="Vit_B12_bind_prot"/>
</dbReference>
<dbReference type="InterPro" id="IPR051030">
    <property type="entry name" value="Vitamin_B12-ABC_binding"/>
</dbReference>
<dbReference type="NCBIfam" id="NF002894">
    <property type="entry name" value="PRK03379.1"/>
    <property type="match status" value="1"/>
</dbReference>
<dbReference type="NCBIfam" id="NF038402">
    <property type="entry name" value="TroA_like"/>
    <property type="match status" value="1"/>
</dbReference>
<dbReference type="PANTHER" id="PTHR42860">
    <property type="entry name" value="VITAMIN B12-BINDING PROTEIN"/>
    <property type="match status" value="1"/>
</dbReference>
<dbReference type="PANTHER" id="PTHR42860:SF1">
    <property type="entry name" value="VITAMIN B12-BINDING PROTEIN"/>
    <property type="match status" value="1"/>
</dbReference>
<dbReference type="Pfam" id="PF01497">
    <property type="entry name" value="Peripla_BP_2"/>
    <property type="match status" value="1"/>
</dbReference>
<dbReference type="SUPFAM" id="SSF53807">
    <property type="entry name" value="Helical backbone' metal receptor"/>
    <property type="match status" value="1"/>
</dbReference>
<dbReference type="PROSITE" id="PS50983">
    <property type="entry name" value="FE_B12_PBP"/>
    <property type="match status" value="1"/>
</dbReference>
<comment type="function">
    <text evidence="1">Part of the ABC transporter complex BtuCDF involved in vitamin B12 import. Binds vitamin B12 and delivers it to the periplasmic surface of BtuC.</text>
</comment>
<comment type="subunit">
    <text evidence="1">The complex is composed of two ATP-binding proteins (BtuD), two transmembrane proteins (BtuC) and a solute-binding protein (BtuF).</text>
</comment>
<comment type="subcellular location">
    <subcellularLocation>
        <location evidence="1">Periplasm</location>
    </subcellularLocation>
</comment>
<comment type="similarity">
    <text evidence="1">Belongs to the BtuF family.</text>
</comment>
<proteinExistence type="inferred from homology"/>
<reference key="1">
    <citation type="journal article" date="2003" name="Nat. Biotechnol.">
        <title>The genome sequence of the entomopathogenic bacterium Photorhabdus luminescens.</title>
        <authorList>
            <person name="Duchaud E."/>
            <person name="Rusniok C."/>
            <person name="Frangeul L."/>
            <person name="Buchrieser C."/>
            <person name="Givaudan A."/>
            <person name="Taourit S."/>
            <person name="Bocs S."/>
            <person name="Boursaux-Eude C."/>
            <person name="Chandler M."/>
            <person name="Charles J.-F."/>
            <person name="Dassa E."/>
            <person name="Derose R."/>
            <person name="Derzelle S."/>
            <person name="Freyssinet G."/>
            <person name="Gaudriault S."/>
            <person name="Medigue C."/>
            <person name="Lanois A."/>
            <person name="Powell K."/>
            <person name="Siguier P."/>
            <person name="Vincent R."/>
            <person name="Wingate V."/>
            <person name="Zouine M."/>
            <person name="Glaser P."/>
            <person name="Boemare N."/>
            <person name="Danchin A."/>
            <person name="Kunst F."/>
        </authorList>
    </citation>
    <scope>NUCLEOTIDE SEQUENCE [LARGE SCALE GENOMIC DNA]</scope>
    <source>
        <strain>DSM 15139 / CIP 105565 / TT01</strain>
    </source>
</reference>
<feature type="signal peptide" evidence="1">
    <location>
        <begin position="1"/>
        <end position="27"/>
    </location>
</feature>
<feature type="chain" id="PRO_0000003501" description="Vitamin B12-binding protein">
    <location>
        <begin position="28"/>
        <end position="275"/>
    </location>
</feature>
<feature type="domain" description="Fe/B12 periplasmic-binding" evidence="1">
    <location>
        <begin position="31"/>
        <end position="275"/>
    </location>
</feature>
<feature type="binding site" evidence="1">
    <location>
        <position position="58"/>
    </location>
    <ligand>
        <name>cyanocob(III)alamin</name>
        <dbReference type="ChEBI" id="CHEBI:17439"/>
    </ligand>
</feature>
<feature type="site" description="Important for BtuC binding" evidence="1">
    <location>
        <position position="80"/>
    </location>
</feature>
<feature type="site" description="Important for BtuC binding" evidence="1">
    <location>
        <position position="210"/>
    </location>
</feature>
<feature type="disulfide bond" evidence="1">
    <location>
        <begin position="191"/>
        <end position="267"/>
    </location>
</feature>
<accession>Q7N842</accession>
<evidence type="ECO:0000255" key="1">
    <source>
        <dbReference type="HAMAP-Rule" id="MF_01000"/>
    </source>
</evidence>
<keyword id="KW-1015">Disulfide bond</keyword>
<keyword id="KW-0574">Periplasm</keyword>
<keyword id="KW-1185">Reference proteome</keyword>
<keyword id="KW-0732">Signal</keyword>
<keyword id="KW-0813">Transport</keyword>
<gene>
    <name evidence="1" type="primary">btuF</name>
    <name type="ordered locus">plu0905</name>
</gene>
<name>BTUF_PHOLL</name>
<organism>
    <name type="scientific">Photorhabdus laumondii subsp. laumondii (strain DSM 15139 / CIP 105565 / TT01)</name>
    <name type="common">Photorhabdus luminescens subsp. laumondii</name>
    <dbReference type="NCBI Taxonomy" id="243265"/>
    <lineage>
        <taxon>Bacteria</taxon>
        <taxon>Pseudomonadati</taxon>
        <taxon>Pseudomonadota</taxon>
        <taxon>Gammaproteobacteria</taxon>
        <taxon>Enterobacterales</taxon>
        <taxon>Morganellaceae</taxon>
        <taxon>Photorhabdus</taxon>
    </lineage>
</organism>
<protein>
    <recommendedName>
        <fullName evidence="1">Vitamin B12-binding protein</fullName>
    </recommendedName>
</protein>